<sequence>MQQRRPVRRALLSVSDKAGIVEFAQALSARGVELLSTGGTARLLAEKGLPVTEVSDYTGFPEMMDGRVKTLHPKVHGGILGRRGQDDAIMEEHQIQPIDMVVVNLYPFAQTVAREGCSLEDAVENIDIGGPTMVRSAAKNHKDVAIVVKSSDYDAIIKEIDANEGSLTLETRFDLAIKAFEHTAAYDSMIANYFGSMVPAYHGESKEAAGRFPRTLNLNFIKKQDMRYGENSHQQAAFYIEENVKEASVATATQVQGKALSYNNIADTDAALECVKEFAEPACVIVKHANPCGVAIGNSILDAYDRAYKTDPTSAFGGIIAFNRELDAETAQAIISRQFVEVIIAPSASEEALKITAAKQNVRVLTCGQWGERVPGLDFKRVNGGLLVQDRDLGMVGAEELRVVTKRQPTEQELRDALFCWKVAKFVKSNAIVYAKNNMTIGIGAGQMSRVYSAKIAGIKAADEGLEVKGSSMASDAFFPFRDGIDAAAAAGVTCVIQPGGSIRDDEVIAAADEHGIAMLFTDMRHFRH</sequence>
<accession>B7NRT9</accession>
<dbReference type="EC" id="2.1.2.3" evidence="1"/>
<dbReference type="EC" id="3.5.4.10" evidence="1"/>
<dbReference type="EMBL" id="CU928164">
    <property type="protein sequence ID" value="CAR20502.1"/>
    <property type="molecule type" value="Genomic_DNA"/>
</dbReference>
<dbReference type="RefSeq" id="WP_001187540.1">
    <property type="nucleotide sequence ID" value="NC_011750.1"/>
</dbReference>
<dbReference type="RefSeq" id="YP_002410270.1">
    <property type="nucleotide sequence ID" value="NC_011750.1"/>
</dbReference>
<dbReference type="SMR" id="B7NRT9"/>
<dbReference type="STRING" id="585057.ECIAI39_4396"/>
<dbReference type="KEGG" id="ect:ECIAI39_4396"/>
<dbReference type="PATRIC" id="fig|585057.6.peg.4543"/>
<dbReference type="HOGENOM" id="CLU_016316_5_2_6"/>
<dbReference type="UniPathway" id="UPA00074">
    <property type="reaction ID" value="UER00133"/>
</dbReference>
<dbReference type="UniPathway" id="UPA00074">
    <property type="reaction ID" value="UER00135"/>
</dbReference>
<dbReference type="Proteomes" id="UP000000749">
    <property type="component" value="Chromosome"/>
</dbReference>
<dbReference type="GO" id="GO:0005829">
    <property type="term" value="C:cytosol"/>
    <property type="evidence" value="ECO:0007669"/>
    <property type="project" value="TreeGrafter"/>
</dbReference>
<dbReference type="GO" id="GO:0003937">
    <property type="term" value="F:IMP cyclohydrolase activity"/>
    <property type="evidence" value="ECO:0007669"/>
    <property type="project" value="UniProtKB-UniRule"/>
</dbReference>
<dbReference type="GO" id="GO:0004643">
    <property type="term" value="F:phosphoribosylaminoimidazolecarboxamide formyltransferase activity"/>
    <property type="evidence" value="ECO:0007669"/>
    <property type="project" value="UniProtKB-UniRule"/>
</dbReference>
<dbReference type="GO" id="GO:0006189">
    <property type="term" value="P:'de novo' IMP biosynthetic process"/>
    <property type="evidence" value="ECO:0007669"/>
    <property type="project" value="UniProtKB-UniRule"/>
</dbReference>
<dbReference type="CDD" id="cd01421">
    <property type="entry name" value="IMPCH"/>
    <property type="match status" value="1"/>
</dbReference>
<dbReference type="FunFam" id="3.40.140.20:FF:000001">
    <property type="entry name" value="Bifunctional purine biosynthesis protein PurH"/>
    <property type="match status" value="1"/>
</dbReference>
<dbReference type="FunFam" id="3.40.140.20:FF:000002">
    <property type="entry name" value="Bifunctional purine biosynthesis protein PurH"/>
    <property type="match status" value="1"/>
</dbReference>
<dbReference type="FunFam" id="3.40.50.1380:FF:000001">
    <property type="entry name" value="Bifunctional purine biosynthesis protein PurH"/>
    <property type="match status" value="1"/>
</dbReference>
<dbReference type="Gene3D" id="3.40.140.20">
    <property type="match status" value="2"/>
</dbReference>
<dbReference type="Gene3D" id="3.40.50.1380">
    <property type="entry name" value="Methylglyoxal synthase-like domain"/>
    <property type="match status" value="1"/>
</dbReference>
<dbReference type="HAMAP" id="MF_00139">
    <property type="entry name" value="PurH"/>
    <property type="match status" value="1"/>
</dbReference>
<dbReference type="InterPro" id="IPR024051">
    <property type="entry name" value="AICAR_Tfase_dup_dom_sf"/>
</dbReference>
<dbReference type="InterPro" id="IPR016193">
    <property type="entry name" value="Cytidine_deaminase-like"/>
</dbReference>
<dbReference type="InterPro" id="IPR011607">
    <property type="entry name" value="MGS-like_dom"/>
</dbReference>
<dbReference type="InterPro" id="IPR036914">
    <property type="entry name" value="MGS-like_dom_sf"/>
</dbReference>
<dbReference type="InterPro" id="IPR002695">
    <property type="entry name" value="PurH-like"/>
</dbReference>
<dbReference type="NCBIfam" id="NF002049">
    <property type="entry name" value="PRK00881.1"/>
    <property type="match status" value="1"/>
</dbReference>
<dbReference type="NCBIfam" id="TIGR00355">
    <property type="entry name" value="purH"/>
    <property type="match status" value="1"/>
</dbReference>
<dbReference type="PANTHER" id="PTHR11692:SF0">
    <property type="entry name" value="BIFUNCTIONAL PURINE BIOSYNTHESIS PROTEIN ATIC"/>
    <property type="match status" value="1"/>
</dbReference>
<dbReference type="PANTHER" id="PTHR11692">
    <property type="entry name" value="BIFUNCTIONAL PURINE BIOSYNTHESIS PROTEIN PURH"/>
    <property type="match status" value="1"/>
</dbReference>
<dbReference type="Pfam" id="PF01808">
    <property type="entry name" value="AICARFT_IMPCHas"/>
    <property type="match status" value="1"/>
</dbReference>
<dbReference type="Pfam" id="PF02142">
    <property type="entry name" value="MGS"/>
    <property type="match status" value="1"/>
</dbReference>
<dbReference type="PIRSF" id="PIRSF000414">
    <property type="entry name" value="AICARFT_IMPCHas"/>
    <property type="match status" value="1"/>
</dbReference>
<dbReference type="SMART" id="SM00798">
    <property type="entry name" value="AICARFT_IMPCHas"/>
    <property type="match status" value="1"/>
</dbReference>
<dbReference type="SMART" id="SM00851">
    <property type="entry name" value="MGS"/>
    <property type="match status" value="1"/>
</dbReference>
<dbReference type="SUPFAM" id="SSF53927">
    <property type="entry name" value="Cytidine deaminase-like"/>
    <property type="match status" value="1"/>
</dbReference>
<dbReference type="SUPFAM" id="SSF52335">
    <property type="entry name" value="Methylglyoxal synthase-like"/>
    <property type="match status" value="1"/>
</dbReference>
<dbReference type="PROSITE" id="PS51855">
    <property type="entry name" value="MGS"/>
    <property type="match status" value="1"/>
</dbReference>
<keyword id="KW-0007">Acetylation</keyword>
<keyword id="KW-0378">Hydrolase</keyword>
<keyword id="KW-0511">Multifunctional enzyme</keyword>
<keyword id="KW-0658">Purine biosynthesis</keyword>
<keyword id="KW-0808">Transferase</keyword>
<reference key="1">
    <citation type="journal article" date="2009" name="PLoS Genet.">
        <title>Organised genome dynamics in the Escherichia coli species results in highly diverse adaptive paths.</title>
        <authorList>
            <person name="Touchon M."/>
            <person name="Hoede C."/>
            <person name="Tenaillon O."/>
            <person name="Barbe V."/>
            <person name="Baeriswyl S."/>
            <person name="Bidet P."/>
            <person name="Bingen E."/>
            <person name="Bonacorsi S."/>
            <person name="Bouchier C."/>
            <person name="Bouvet O."/>
            <person name="Calteau A."/>
            <person name="Chiapello H."/>
            <person name="Clermont O."/>
            <person name="Cruveiller S."/>
            <person name="Danchin A."/>
            <person name="Diard M."/>
            <person name="Dossat C."/>
            <person name="Karoui M.E."/>
            <person name="Frapy E."/>
            <person name="Garry L."/>
            <person name="Ghigo J.M."/>
            <person name="Gilles A.M."/>
            <person name="Johnson J."/>
            <person name="Le Bouguenec C."/>
            <person name="Lescat M."/>
            <person name="Mangenot S."/>
            <person name="Martinez-Jehanne V."/>
            <person name="Matic I."/>
            <person name="Nassif X."/>
            <person name="Oztas S."/>
            <person name="Petit M.A."/>
            <person name="Pichon C."/>
            <person name="Rouy Z."/>
            <person name="Ruf C.S."/>
            <person name="Schneider D."/>
            <person name="Tourret J."/>
            <person name="Vacherie B."/>
            <person name="Vallenet D."/>
            <person name="Medigue C."/>
            <person name="Rocha E.P.C."/>
            <person name="Denamur E."/>
        </authorList>
    </citation>
    <scope>NUCLEOTIDE SEQUENCE [LARGE SCALE GENOMIC DNA]</scope>
    <source>
        <strain>IAI39 / ExPEC</strain>
    </source>
</reference>
<comment type="catalytic activity">
    <reaction evidence="1">
        <text>(6R)-10-formyltetrahydrofolate + 5-amino-1-(5-phospho-beta-D-ribosyl)imidazole-4-carboxamide = 5-formamido-1-(5-phospho-D-ribosyl)imidazole-4-carboxamide + (6S)-5,6,7,8-tetrahydrofolate</text>
        <dbReference type="Rhea" id="RHEA:22192"/>
        <dbReference type="ChEBI" id="CHEBI:57453"/>
        <dbReference type="ChEBI" id="CHEBI:58467"/>
        <dbReference type="ChEBI" id="CHEBI:58475"/>
        <dbReference type="ChEBI" id="CHEBI:195366"/>
        <dbReference type="EC" id="2.1.2.3"/>
    </reaction>
</comment>
<comment type="catalytic activity">
    <reaction evidence="1">
        <text>IMP + H2O = 5-formamido-1-(5-phospho-D-ribosyl)imidazole-4-carboxamide</text>
        <dbReference type="Rhea" id="RHEA:18445"/>
        <dbReference type="ChEBI" id="CHEBI:15377"/>
        <dbReference type="ChEBI" id="CHEBI:58053"/>
        <dbReference type="ChEBI" id="CHEBI:58467"/>
        <dbReference type="EC" id="3.5.4.10"/>
    </reaction>
</comment>
<comment type="pathway">
    <text evidence="1">Purine metabolism; IMP biosynthesis via de novo pathway; 5-formamido-1-(5-phospho-D-ribosyl)imidazole-4-carboxamide from 5-amino-1-(5-phospho-D-ribosyl)imidazole-4-carboxamide (10-formyl THF route): step 1/1.</text>
</comment>
<comment type="pathway">
    <text evidence="1">Purine metabolism; IMP biosynthesis via de novo pathway; IMP from 5-formamido-1-(5-phospho-D-ribosyl)imidazole-4-carboxamide: step 1/1.</text>
</comment>
<comment type="domain">
    <text evidence="1">The IMP cyclohydrolase activity resides in the N-terminal region.</text>
</comment>
<comment type="similarity">
    <text evidence="1">Belongs to the PurH family.</text>
</comment>
<name>PUR9_ECO7I</name>
<proteinExistence type="inferred from homology"/>
<gene>
    <name evidence="1" type="primary">purH</name>
    <name type="ordered locus">ECIAI39_4396</name>
</gene>
<evidence type="ECO:0000255" key="1">
    <source>
        <dbReference type="HAMAP-Rule" id="MF_00139"/>
    </source>
</evidence>
<evidence type="ECO:0000255" key="2">
    <source>
        <dbReference type="PROSITE-ProRule" id="PRU01202"/>
    </source>
</evidence>
<feature type="chain" id="PRO_1000117871" description="Bifunctional purine biosynthesis protein PurH">
    <location>
        <begin position="1"/>
        <end position="529"/>
    </location>
</feature>
<feature type="domain" description="MGS-like" evidence="2">
    <location>
        <begin position="1"/>
        <end position="148"/>
    </location>
</feature>
<feature type="modified residue" description="N6-acetyllysine" evidence="1">
    <location>
        <position position="287"/>
    </location>
</feature>
<protein>
    <recommendedName>
        <fullName evidence="1">Bifunctional purine biosynthesis protein PurH</fullName>
    </recommendedName>
    <domain>
        <recommendedName>
            <fullName evidence="1">Phosphoribosylaminoimidazolecarboxamide formyltransferase</fullName>
            <ecNumber evidence="1">2.1.2.3</ecNumber>
        </recommendedName>
        <alternativeName>
            <fullName evidence="1">AICAR transformylase</fullName>
        </alternativeName>
    </domain>
    <domain>
        <recommendedName>
            <fullName evidence="1">IMP cyclohydrolase</fullName>
            <ecNumber evidence="1">3.5.4.10</ecNumber>
        </recommendedName>
        <alternativeName>
            <fullName evidence="1">ATIC</fullName>
        </alternativeName>
        <alternativeName>
            <fullName evidence="1">IMP synthase</fullName>
        </alternativeName>
        <alternativeName>
            <fullName evidence="1">Inosinicase</fullName>
        </alternativeName>
    </domain>
</protein>
<organism>
    <name type="scientific">Escherichia coli O7:K1 (strain IAI39 / ExPEC)</name>
    <dbReference type="NCBI Taxonomy" id="585057"/>
    <lineage>
        <taxon>Bacteria</taxon>
        <taxon>Pseudomonadati</taxon>
        <taxon>Pseudomonadota</taxon>
        <taxon>Gammaproteobacteria</taxon>
        <taxon>Enterobacterales</taxon>
        <taxon>Enterobacteriaceae</taxon>
        <taxon>Escherichia</taxon>
    </lineage>
</organism>